<accession>Q9F234</accession>
<feature type="chain" id="PRO_0000185368" description="Alpha-glucosidase 2">
    <location>
        <begin position="1"/>
        <end position="787"/>
    </location>
</feature>
<feature type="active site" evidence="1">
    <location>
        <position position="407"/>
    </location>
</feature>
<feature type="active site" evidence="1">
    <location>
        <position position="410"/>
    </location>
</feature>
<feature type="active site" description="Proton donor" evidence="1">
    <location>
        <position position="484"/>
    </location>
</feature>
<organism>
    <name type="scientific">Bacillus thermoamyloliquefaciens</name>
    <dbReference type="NCBI Taxonomy" id="1425"/>
    <lineage>
        <taxon>Bacteria</taxon>
        <taxon>Bacillati</taxon>
        <taxon>Bacillota</taxon>
        <taxon>Bacilli</taxon>
        <taxon>Bacillales</taxon>
        <taxon>Bacillaceae</taxon>
        <taxon>Bacillus</taxon>
    </lineage>
</organism>
<name>AGL2_BACTQ</name>
<dbReference type="EC" id="3.2.1.20"/>
<dbReference type="EMBL" id="AB012238">
    <property type="protein sequence ID" value="BAA76396.1"/>
    <property type="molecule type" value="Genomic_DNA"/>
</dbReference>
<dbReference type="SMR" id="Q9F234"/>
<dbReference type="CAZy" id="GH31">
    <property type="family name" value="Glycoside Hydrolase Family 31"/>
</dbReference>
<dbReference type="BRENDA" id="3.2.1.20">
    <property type="organism ID" value="7482"/>
</dbReference>
<dbReference type="GO" id="GO:0004558">
    <property type="term" value="F:alpha-1,4-glucosidase activity"/>
    <property type="evidence" value="ECO:0007669"/>
    <property type="project" value="UniProtKB-EC"/>
</dbReference>
<dbReference type="GO" id="GO:0030246">
    <property type="term" value="F:carbohydrate binding"/>
    <property type="evidence" value="ECO:0007669"/>
    <property type="project" value="InterPro"/>
</dbReference>
<dbReference type="GO" id="GO:0005975">
    <property type="term" value="P:carbohydrate metabolic process"/>
    <property type="evidence" value="ECO:0007669"/>
    <property type="project" value="InterPro"/>
</dbReference>
<dbReference type="CDD" id="cd06604">
    <property type="entry name" value="GH31_glucosidase_II_MalA"/>
    <property type="match status" value="1"/>
</dbReference>
<dbReference type="CDD" id="cd14752">
    <property type="entry name" value="GH31_N"/>
    <property type="match status" value="1"/>
</dbReference>
<dbReference type="Gene3D" id="3.20.20.80">
    <property type="entry name" value="Glycosidases"/>
    <property type="match status" value="2"/>
</dbReference>
<dbReference type="Gene3D" id="2.60.40.1760">
    <property type="entry name" value="glycosyl hydrolase (family 31)"/>
    <property type="match status" value="1"/>
</dbReference>
<dbReference type="Gene3D" id="2.60.40.1180">
    <property type="entry name" value="Golgi alpha-mannosidase II"/>
    <property type="match status" value="2"/>
</dbReference>
<dbReference type="InterPro" id="IPR033403">
    <property type="entry name" value="DUF5110"/>
</dbReference>
<dbReference type="InterPro" id="IPR011013">
    <property type="entry name" value="Gal_mutarotase_sf_dom"/>
</dbReference>
<dbReference type="InterPro" id="IPR030458">
    <property type="entry name" value="Glyco_hydro_31_AS"/>
</dbReference>
<dbReference type="InterPro" id="IPR048395">
    <property type="entry name" value="Glyco_hydro_31_C"/>
</dbReference>
<dbReference type="InterPro" id="IPR030459">
    <property type="entry name" value="Glyco_hydro_31_CS"/>
</dbReference>
<dbReference type="InterPro" id="IPR025887">
    <property type="entry name" value="Glyco_hydro_31_N_dom"/>
</dbReference>
<dbReference type="InterPro" id="IPR000322">
    <property type="entry name" value="Glyco_hydro_31_TIM"/>
</dbReference>
<dbReference type="InterPro" id="IPR013780">
    <property type="entry name" value="Glyco_hydro_b"/>
</dbReference>
<dbReference type="InterPro" id="IPR017853">
    <property type="entry name" value="Glycoside_hydrolase_SF"/>
</dbReference>
<dbReference type="PANTHER" id="PTHR22762">
    <property type="entry name" value="ALPHA-GLUCOSIDASE"/>
    <property type="match status" value="1"/>
</dbReference>
<dbReference type="PANTHER" id="PTHR22762:SF166">
    <property type="entry name" value="ALPHA-GLUCOSIDASE"/>
    <property type="match status" value="1"/>
</dbReference>
<dbReference type="Pfam" id="PF17137">
    <property type="entry name" value="DUF5110"/>
    <property type="match status" value="1"/>
</dbReference>
<dbReference type="Pfam" id="PF13802">
    <property type="entry name" value="Gal_mutarotas_2"/>
    <property type="match status" value="1"/>
</dbReference>
<dbReference type="Pfam" id="PF01055">
    <property type="entry name" value="Glyco_hydro_31_2nd"/>
    <property type="match status" value="1"/>
</dbReference>
<dbReference type="Pfam" id="PF21365">
    <property type="entry name" value="Glyco_hydro_31_3rd"/>
    <property type="match status" value="1"/>
</dbReference>
<dbReference type="SUPFAM" id="SSF51445">
    <property type="entry name" value="(Trans)glycosidases"/>
    <property type="match status" value="1"/>
</dbReference>
<dbReference type="SUPFAM" id="SSF74650">
    <property type="entry name" value="Galactose mutarotase-like"/>
    <property type="match status" value="1"/>
</dbReference>
<dbReference type="SUPFAM" id="SSF51011">
    <property type="entry name" value="Glycosyl hydrolase domain"/>
    <property type="match status" value="1"/>
</dbReference>
<dbReference type="PROSITE" id="PS00129">
    <property type="entry name" value="GLYCOSYL_HYDROL_F31_1"/>
    <property type="match status" value="1"/>
</dbReference>
<dbReference type="PROSITE" id="PS00707">
    <property type="entry name" value="GLYCOSYL_HYDROL_F31_2"/>
    <property type="match status" value="1"/>
</dbReference>
<protein>
    <recommendedName>
        <fullName>Alpha-glucosidase 2</fullName>
        <ecNumber>3.2.1.20</ecNumber>
    </recommendedName>
    <alternativeName>
        <fullName>Alpha-glucosidase II</fullName>
    </alternativeName>
</protein>
<evidence type="ECO:0000250" key="1"/>
<evidence type="ECO:0000305" key="2"/>
<comment type="catalytic activity">
    <reaction>
        <text>Hydrolysis of terminal, non-reducing (1-&gt;4)-linked alpha-D-glucose residues with release of alpha-D-glucose.</text>
        <dbReference type="EC" id="3.2.1.20"/>
    </reaction>
</comment>
<comment type="subunit">
    <text>Homohexamer.</text>
</comment>
<comment type="similarity">
    <text evidence="2">Belongs to the glycosyl hydrolase 31 family.</text>
</comment>
<reference key="1">
    <citation type="journal article" date="2000" name="Biosci. Biotechnol. Biochem.">
        <title>The primary structure of the subunit in Bacillus thermoamyloliquefaciens KP1071 molecular weight 540,000 homohexameric alpha-glucosidase II belonging to the glycosyl hydrolase family 31.</title>
        <authorList>
            <person name="Kashiwabara S."/>
            <person name="Azuma S."/>
            <person name="Tsuduki M."/>
            <person name="Suzuki Y."/>
        </authorList>
    </citation>
    <scope>NUCLEOTIDE SEQUENCE [GENOMIC DNA]</scope>
    <source>
        <strain>KP1071</strain>
    </source>
</reference>
<sequence>MLEDTSFAIQPEQDDKTQETHRIDIGNMHTFSHTEHVFSFHCDTGIVKIRFYREDIVRIAFNPFGETSLSTSVAVVKEPEKVDASVHETEEEVTLTSAKQTVVLQKRPFRVRIYDNHGRLLVAEGKKGMAFTYQGEVCCFKMMDEADHFYGFGEKTGFLDKRGETMTMWNTDVYAPHNPETDPLYQSHPYFMTVRNGSAHGIFFDNTYKTTFDFQTATDEYCFSAEGGAIDYYVFAGPTPKDVLEQYTDLTGRMPLPPKWALGYHQSRYSYETEQEVREIAQTFIEKDIPLDVIYLDIHYMNGYRVFTFDRNRFPNLKQLIADLKQKGIRVVPIVDPGVKEDPEYVIYQEGIRHDYFCKYIEGNVYFGEVWPGKSAFPDFTNKKVRKWWGEKHQFYTDLGIEGIWNDMNEPSVFNETKTMDVKVIHDNDGDPKTHRELHNVYGFMMGEATYKGMKKLLNGKRPFLLTRAGFSGIQRYAAVWTGDNRSFWEHLQMSLPMCMNLGLSGVAFCGPDVGGFAHNTNGELLTRWMQVGAFTPYFRNHCAIGFRRQEPWAFGEKYERIIKKYIRLRYQWLPHLYTLFAEAHETGAPVMRPLFFEYPDDENTYNLYDEFLVGANVLIAPIMTPSTTRRVAYFPKGNWVDYWTGEVLEGGQYHLISADLETLPIFIKQGSAIALGDVKRSTEMPDEHRTVHIYKANGGKATYVLYDDDGQTFSYEKGDYLRMYIEVEYGENSVHIVTKSEGTYQPSWKLSFAIHHATEQTKVTIDGNEQNAIFDPHQRILLIQSE</sequence>
<keyword id="KW-0326">Glycosidase</keyword>
<keyword id="KW-0378">Hydrolase</keyword>
<proteinExistence type="inferred from homology"/>